<name>PHNC_ANADE</name>
<reference key="1">
    <citation type="submission" date="2006-01" db="EMBL/GenBank/DDBJ databases">
        <title>Complete sequence of Anaeromyxobacter dehalogenans 2CP-C.</title>
        <authorList>
            <person name="Copeland A."/>
            <person name="Lucas S."/>
            <person name="Lapidus A."/>
            <person name="Barry K."/>
            <person name="Detter J.C."/>
            <person name="Glavina T."/>
            <person name="Hammon N."/>
            <person name="Israni S."/>
            <person name="Pitluck S."/>
            <person name="Brettin T."/>
            <person name="Bruce D."/>
            <person name="Han C."/>
            <person name="Tapia R."/>
            <person name="Gilna P."/>
            <person name="Kiss H."/>
            <person name="Schmutz J."/>
            <person name="Larimer F."/>
            <person name="Land M."/>
            <person name="Kyrpides N."/>
            <person name="Anderson I."/>
            <person name="Sanford R.A."/>
            <person name="Ritalahti K.M."/>
            <person name="Thomas H.S."/>
            <person name="Kirby J.R."/>
            <person name="Zhulin I.B."/>
            <person name="Loeffler F.E."/>
            <person name="Richardson P."/>
        </authorList>
    </citation>
    <scope>NUCLEOTIDE SEQUENCE [LARGE SCALE GENOMIC DNA]</scope>
    <source>
        <strain>2CP-C</strain>
    </source>
</reference>
<sequence>MPQRPEAARAGPVAGPDAASKPAPGPALTLRGAGRAYGPVRALRPLTLEIRRGERVALLGPSGAGKSTLLRLLDTSLAPSEGTVEVLGQPVADTDARRLRALRARIGTVHQQLLLVPQATAMQNVVAGRLGRTSLARTLAALVSRREAARVRAVLDEVGIGDKIFERVDRLSGGEQQRVAIARTLYQDPELILADEPLASVDPARAADIAALLARAFAGRTLVVSTHRIEPLLAHVDRVVALREGALAFDKPAAALTLRDLGELYEARRGAADPARAPAARPPSDPVVAPGGTLRIGASSTPGEHLLPSIVRAFARAYPGTRVSLSLSDSAAVTAAVRDGALDLGFVGARDDDPALAYEDVARDEIVLVAAPVLELPPEPITLEVAARLPRVDREPGSGTRAVVEQHLANMGAALDPAAVVLEAGALVALKAAVVSGMGVAFVSRRAVEDDLRGGHVRTVRVEGLSIPRHVFAVLRRSPVPSAAARAFLEVARAEVPP</sequence>
<dbReference type="EC" id="7.3.2.2" evidence="1"/>
<dbReference type="EMBL" id="CP000251">
    <property type="protein sequence ID" value="ABC80231.1"/>
    <property type="molecule type" value="Genomic_DNA"/>
</dbReference>
<dbReference type="RefSeq" id="WP_011419514.1">
    <property type="nucleotide sequence ID" value="NC_007760.1"/>
</dbReference>
<dbReference type="SMR" id="Q2IN45"/>
<dbReference type="STRING" id="290397.Adeh_0455"/>
<dbReference type="KEGG" id="ade:Adeh_0455"/>
<dbReference type="eggNOG" id="COG0226">
    <property type="taxonomic scope" value="Bacteria"/>
</dbReference>
<dbReference type="eggNOG" id="COG3638">
    <property type="taxonomic scope" value="Bacteria"/>
</dbReference>
<dbReference type="HOGENOM" id="CLU_041390_0_0_7"/>
<dbReference type="OrthoDB" id="9802264at2"/>
<dbReference type="Proteomes" id="UP000001935">
    <property type="component" value="Chromosome"/>
</dbReference>
<dbReference type="GO" id="GO:0005886">
    <property type="term" value="C:plasma membrane"/>
    <property type="evidence" value="ECO:0007669"/>
    <property type="project" value="UniProtKB-SubCell"/>
</dbReference>
<dbReference type="GO" id="GO:0015416">
    <property type="term" value="F:ABC-type phosphonate transporter activity"/>
    <property type="evidence" value="ECO:0007669"/>
    <property type="project" value="UniProtKB-EC"/>
</dbReference>
<dbReference type="GO" id="GO:0005524">
    <property type="term" value="F:ATP binding"/>
    <property type="evidence" value="ECO:0007669"/>
    <property type="project" value="UniProtKB-KW"/>
</dbReference>
<dbReference type="GO" id="GO:0016887">
    <property type="term" value="F:ATP hydrolysis activity"/>
    <property type="evidence" value="ECO:0007669"/>
    <property type="project" value="InterPro"/>
</dbReference>
<dbReference type="Gene3D" id="3.40.190.290">
    <property type="match status" value="1"/>
</dbReference>
<dbReference type="Gene3D" id="3.40.50.300">
    <property type="entry name" value="P-loop containing nucleotide triphosphate hydrolases"/>
    <property type="match status" value="1"/>
</dbReference>
<dbReference type="InterPro" id="IPR003593">
    <property type="entry name" value="AAA+_ATPase"/>
</dbReference>
<dbReference type="InterPro" id="IPR003439">
    <property type="entry name" value="ABC_transporter-like_ATP-bd"/>
</dbReference>
<dbReference type="InterPro" id="IPR017871">
    <property type="entry name" value="ABC_transporter-like_CS"/>
</dbReference>
<dbReference type="InterPro" id="IPR015854">
    <property type="entry name" value="ABC_transpr_LolD-like"/>
</dbReference>
<dbReference type="InterPro" id="IPR005119">
    <property type="entry name" value="LysR_subst-bd"/>
</dbReference>
<dbReference type="InterPro" id="IPR027417">
    <property type="entry name" value="P-loop_NTPase"/>
</dbReference>
<dbReference type="PANTHER" id="PTHR24220">
    <property type="entry name" value="IMPORT ATP-BINDING PROTEIN"/>
    <property type="match status" value="1"/>
</dbReference>
<dbReference type="PANTHER" id="PTHR24220:SF659">
    <property type="entry name" value="TRANSPORTER, PUTATIVE-RELATED"/>
    <property type="match status" value="1"/>
</dbReference>
<dbReference type="Pfam" id="PF00005">
    <property type="entry name" value="ABC_tran"/>
    <property type="match status" value="1"/>
</dbReference>
<dbReference type="Pfam" id="PF03466">
    <property type="entry name" value="LysR_substrate"/>
    <property type="match status" value="1"/>
</dbReference>
<dbReference type="SMART" id="SM00382">
    <property type="entry name" value="AAA"/>
    <property type="match status" value="1"/>
</dbReference>
<dbReference type="SUPFAM" id="SSF52540">
    <property type="entry name" value="P-loop containing nucleoside triphosphate hydrolases"/>
    <property type="match status" value="1"/>
</dbReference>
<dbReference type="SUPFAM" id="SSF53850">
    <property type="entry name" value="Periplasmic binding protein-like II"/>
    <property type="match status" value="1"/>
</dbReference>
<dbReference type="PROSITE" id="PS00211">
    <property type="entry name" value="ABC_TRANSPORTER_1"/>
    <property type="match status" value="1"/>
</dbReference>
<dbReference type="PROSITE" id="PS50893">
    <property type="entry name" value="ABC_TRANSPORTER_2"/>
    <property type="match status" value="1"/>
</dbReference>
<dbReference type="PROSITE" id="PS51249">
    <property type="entry name" value="PHNC"/>
    <property type="match status" value="1"/>
</dbReference>
<comment type="function">
    <text evidence="1">Part of the ABC transporter complex PhnCDE involved in phosphonates import. Responsible for energy coupling to the transport system.</text>
</comment>
<comment type="catalytic activity">
    <reaction evidence="1">
        <text>phosphonate(out) + ATP + H2O = phosphonate(in) + ADP + phosphate + H(+)</text>
        <dbReference type="Rhea" id="RHEA:18065"/>
        <dbReference type="ChEBI" id="CHEBI:15377"/>
        <dbReference type="ChEBI" id="CHEBI:15378"/>
        <dbReference type="ChEBI" id="CHEBI:16215"/>
        <dbReference type="ChEBI" id="CHEBI:30616"/>
        <dbReference type="ChEBI" id="CHEBI:43474"/>
        <dbReference type="ChEBI" id="CHEBI:456216"/>
        <dbReference type="EC" id="7.3.2.2"/>
    </reaction>
</comment>
<comment type="subunit">
    <text evidence="1">The complex is composed of two ATP-binding proteins (PhnC), two transmembrane proteins (PhnE) and a solute-binding protein (PhnD).</text>
</comment>
<comment type="subcellular location">
    <subcellularLocation>
        <location evidence="1">Cell inner membrane</location>
        <topology evidence="1">Peripheral membrane protein</topology>
    </subcellularLocation>
</comment>
<comment type="similarity">
    <text evidence="1">Belongs to the ABC transporter superfamily. Phosphonates importer (TC 3.A.1.9.1) family.</text>
</comment>
<comment type="caution">
    <text evidence="3">The fusion between the ATP-binding domain and LysR substrate binding domain is unusual. It could be due to a sequencing error.</text>
</comment>
<gene>
    <name evidence="1" type="primary">phnC</name>
    <name type="ordered locus">Adeh_0455</name>
</gene>
<accession>Q2IN45</accession>
<keyword id="KW-0067">ATP-binding</keyword>
<keyword id="KW-0997">Cell inner membrane</keyword>
<keyword id="KW-1003">Cell membrane</keyword>
<keyword id="KW-0472">Membrane</keyword>
<keyword id="KW-0547">Nucleotide-binding</keyword>
<keyword id="KW-0918">Phosphonate transport</keyword>
<keyword id="KW-1185">Reference proteome</keyword>
<keyword id="KW-1278">Translocase</keyword>
<keyword id="KW-0813">Transport</keyword>
<organism>
    <name type="scientific">Anaeromyxobacter dehalogenans (strain 2CP-C)</name>
    <dbReference type="NCBI Taxonomy" id="290397"/>
    <lineage>
        <taxon>Bacteria</taxon>
        <taxon>Pseudomonadati</taxon>
        <taxon>Myxococcota</taxon>
        <taxon>Myxococcia</taxon>
        <taxon>Myxococcales</taxon>
        <taxon>Cystobacterineae</taxon>
        <taxon>Anaeromyxobacteraceae</taxon>
        <taxon>Anaeromyxobacter</taxon>
    </lineage>
</organism>
<protein>
    <recommendedName>
        <fullName evidence="1">Phosphonates import ATP-binding protein PhnC</fullName>
        <ecNumber evidence="1">7.3.2.2</ecNumber>
    </recommendedName>
</protein>
<feature type="chain" id="PRO_0000274705" description="Phosphonates import ATP-binding protein PhnC">
    <location>
        <begin position="1"/>
        <end position="498"/>
    </location>
</feature>
<feature type="domain" description="ABC transporter" evidence="1">
    <location>
        <begin position="28"/>
        <end position="269"/>
    </location>
</feature>
<feature type="region of interest" description="Disordered" evidence="2">
    <location>
        <begin position="1"/>
        <end position="27"/>
    </location>
</feature>
<feature type="region of interest" description="LysR substrate binding domain">
    <location>
        <begin position="270"/>
        <end position="498"/>
    </location>
</feature>
<feature type="binding site" evidence="1">
    <location>
        <begin position="60"/>
        <end position="67"/>
    </location>
    <ligand>
        <name>ATP</name>
        <dbReference type="ChEBI" id="CHEBI:30616"/>
    </ligand>
</feature>
<proteinExistence type="inferred from homology"/>
<evidence type="ECO:0000255" key="1">
    <source>
        <dbReference type="HAMAP-Rule" id="MF_01713"/>
    </source>
</evidence>
<evidence type="ECO:0000256" key="2">
    <source>
        <dbReference type="SAM" id="MobiDB-lite"/>
    </source>
</evidence>
<evidence type="ECO:0000305" key="3"/>